<organism>
    <name type="scientific">Notamacropus eugenii</name>
    <name type="common">Tammar wallaby</name>
    <name type="synonym">Macropus eugenii</name>
    <dbReference type="NCBI Taxonomy" id="9315"/>
    <lineage>
        <taxon>Eukaryota</taxon>
        <taxon>Metazoa</taxon>
        <taxon>Chordata</taxon>
        <taxon>Craniata</taxon>
        <taxon>Vertebrata</taxon>
        <taxon>Euteleostomi</taxon>
        <taxon>Mammalia</taxon>
        <taxon>Metatheria</taxon>
        <taxon>Diprotodontia</taxon>
        <taxon>Macropodidae</taxon>
        <taxon>Notamacropus</taxon>
    </lineage>
</organism>
<keyword id="KW-0007">Acetylation</keyword>
<keyword id="KW-0903">Direct protein sequencing</keyword>
<keyword id="KW-0349">Heme</keyword>
<keyword id="KW-0408">Iron</keyword>
<keyword id="KW-0479">Metal-binding</keyword>
<keyword id="KW-0561">Oxygen transport</keyword>
<keyword id="KW-0597">Phosphoprotein</keyword>
<keyword id="KW-0813">Transport</keyword>
<comment type="function">
    <text>The zeta chain is an alpha-type chain of mammalian embryonic hemoglobin.</text>
</comment>
<comment type="subunit">
    <text evidence="3">Heterotetramer of two zeta chains and two epsilon chains.</text>
</comment>
<comment type="developmental stage">
    <text evidence="3">Detected in blood from prenatal and neonatal animals.</text>
</comment>
<comment type="similarity">
    <text evidence="2">Belongs to the globin family.</text>
</comment>
<feature type="chain" id="PRO_0000052854" description="Hemoglobin subunit zeta">
    <location>
        <begin position="1"/>
        <end position="79" status="greater than"/>
    </location>
</feature>
<feature type="domain" description="Globin" evidence="2">
    <location>
        <begin position="1"/>
        <end position="79"/>
    </location>
</feature>
<feature type="binding site" description="distal binding residue" evidence="2">
    <location>
        <position position="59"/>
    </location>
    <ligand>
        <name>heme b</name>
        <dbReference type="ChEBI" id="CHEBI:60344"/>
    </ligand>
    <ligandPart>
        <name>Fe</name>
        <dbReference type="ChEBI" id="CHEBI:18248"/>
    </ligandPart>
</feature>
<feature type="modified residue" description="N-acetylserine" evidence="3">
    <location>
        <position position="1"/>
    </location>
</feature>
<feature type="modified residue" description="Phosphoserine" evidence="1">
    <location>
        <position position="38"/>
    </location>
</feature>
<feature type="modified residue" description="Phosphoserine" evidence="1">
    <location>
        <position position="53"/>
    </location>
</feature>
<feature type="unsure residue" description="K or R">
    <location>
        <position position="16"/>
    </location>
</feature>
<feature type="unsure residue" description="R or K">
    <location>
        <position position="17"/>
    </location>
</feature>
<feature type="unsure residue" description="K or R">
    <location>
        <position position="26"/>
    </location>
</feature>
<feature type="unsure residue" description="K or R">
    <location>
        <position position="43"/>
    </location>
</feature>
<feature type="unsure residue" description="K or R">
    <location>
        <position position="54"/>
    </location>
</feature>
<feature type="unsure residue" description="K or R">
    <location>
        <position position="71"/>
    </location>
</feature>
<feature type="non-consecutive residues" evidence="4">
    <location>
        <begin position="16"/>
        <end position="17"/>
    </location>
</feature>
<feature type="non-consecutive residues" evidence="4">
    <location>
        <begin position="42"/>
        <end position="43"/>
    </location>
</feature>
<feature type="non-terminal residue">
    <location>
        <position position="79"/>
    </location>
</feature>
<dbReference type="iPTMnet" id="P81044"/>
<dbReference type="GO" id="GO:0072562">
    <property type="term" value="C:blood microparticle"/>
    <property type="evidence" value="ECO:0007669"/>
    <property type="project" value="TreeGrafter"/>
</dbReference>
<dbReference type="GO" id="GO:0031838">
    <property type="term" value="C:haptoglobin-hemoglobin complex"/>
    <property type="evidence" value="ECO:0007669"/>
    <property type="project" value="TreeGrafter"/>
</dbReference>
<dbReference type="GO" id="GO:0005833">
    <property type="term" value="C:hemoglobin complex"/>
    <property type="evidence" value="ECO:0007669"/>
    <property type="project" value="TreeGrafter"/>
</dbReference>
<dbReference type="GO" id="GO:0031720">
    <property type="term" value="F:haptoglobin binding"/>
    <property type="evidence" value="ECO:0007669"/>
    <property type="project" value="TreeGrafter"/>
</dbReference>
<dbReference type="GO" id="GO:0020037">
    <property type="term" value="F:heme binding"/>
    <property type="evidence" value="ECO:0007669"/>
    <property type="project" value="InterPro"/>
</dbReference>
<dbReference type="GO" id="GO:0046872">
    <property type="term" value="F:metal ion binding"/>
    <property type="evidence" value="ECO:0007669"/>
    <property type="project" value="UniProtKB-KW"/>
</dbReference>
<dbReference type="GO" id="GO:0043177">
    <property type="term" value="F:organic acid binding"/>
    <property type="evidence" value="ECO:0007669"/>
    <property type="project" value="TreeGrafter"/>
</dbReference>
<dbReference type="GO" id="GO:0019825">
    <property type="term" value="F:oxygen binding"/>
    <property type="evidence" value="ECO:0007669"/>
    <property type="project" value="InterPro"/>
</dbReference>
<dbReference type="GO" id="GO:0005344">
    <property type="term" value="F:oxygen carrier activity"/>
    <property type="evidence" value="ECO:0007669"/>
    <property type="project" value="UniProtKB-KW"/>
</dbReference>
<dbReference type="GO" id="GO:0004601">
    <property type="term" value="F:peroxidase activity"/>
    <property type="evidence" value="ECO:0007669"/>
    <property type="project" value="TreeGrafter"/>
</dbReference>
<dbReference type="GO" id="GO:0042744">
    <property type="term" value="P:hydrogen peroxide catabolic process"/>
    <property type="evidence" value="ECO:0007669"/>
    <property type="project" value="TreeGrafter"/>
</dbReference>
<dbReference type="Gene3D" id="1.10.490.10">
    <property type="entry name" value="Globins"/>
    <property type="match status" value="2"/>
</dbReference>
<dbReference type="InterPro" id="IPR000971">
    <property type="entry name" value="Globin"/>
</dbReference>
<dbReference type="InterPro" id="IPR009050">
    <property type="entry name" value="Globin-like_sf"/>
</dbReference>
<dbReference type="InterPro" id="IPR012292">
    <property type="entry name" value="Globin/Proto"/>
</dbReference>
<dbReference type="InterPro" id="IPR050056">
    <property type="entry name" value="Hemoglobin_oxygen_transport"/>
</dbReference>
<dbReference type="PANTHER" id="PTHR11442">
    <property type="entry name" value="HEMOGLOBIN FAMILY MEMBER"/>
    <property type="match status" value="1"/>
</dbReference>
<dbReference type="PANTHER" id="PTHR11442:SF41">
    <property type="entry name" value="HEMOGLOBIN SUBUNIT ZETA"/>
    <property type="match status" value="1"/>
</dbReference>
<dbReference type="Pfam" id="PF00042">
    <property type="entry name" value="Globin"/>
    <property type="match status" value="1"/>
</dbReference>
<dbReference type="SUPFAM" id="SSF46458">
    <property type="entry name" value="Globin-like"/>
    <property type="match status" value="1"/>
</dbReference>
<dbReference type="PROSITE" id="PS01033">
    <property type="entry name" value="GLOBIN"/>
    <property type="match status" value="1"/>
</dbReference>
<evidence type="ECO:0000250" key="1">
    <source>
        <dbReference type="UniProtKB" id="P02008"/>
    </source>
</evidence>
<evidence type="ECO:0000255" key="2">
    <source>
        <dbReference type="PROSITE-ProRule" id="PRU00238"/>
    </source>
</evidence>
<evidence type="ECO:0000269" key="3">
    <source>
    </source>
</evidence>
<evidence type="ECO:0000305" key="4"/>
<proteinExistence type="evidence at protein level"/>
<accession>P81044</accession>
<sequence>SLTKTXXTIIXAMWAKRLFTSYPQTKTYFPHFDLHPDSAQLRKNIDNIHSALSKLSELHAYILRVDPVNFKLLSHXFLV</sequence>
<protein>
    <recommendedName>
        <fullName>Hemoglobin subunit zeta</fullName>
    </recommendedName>
    <alternativeName>
        <fullName>Hemoglobin zeta chain</fullName>
    </alternativeName>
    <alternativeName>
        <fullName>Zeta-globin</fullName>
    </alternativeName>
</protein>
<name>HBAZ_NOTEU</name>
<reference key="1">
    <citation type="journal article" date="1997" name="Eur. J. Biochem.">
        <title>Characterization of the embryonic globin chains of the marsupial Tammar wallaby, Macropus eugenii.</title>
        <authorList>
            <person name="Holland R.A.B."/>
            <person name="Gooley A.A."/>
        </authorList>
    </citation>
    <scope>PROTEIN SEQUENCE</scope>
    <scope>ACETYLATION AT SER-1</scope>
    <scope>SUBUNIT</scope>
    <scope>IDENTIFICATION BY MASS SPECTROMETRY</scope>
    <scope>DEVELOPMENTAL STAGE</scope>
    <source>
        <tissue>Blood</tissue>
    </source>
</reference>